<proteinExistence type="evidence at transcript level"/>
<sequence>MKLIILTGLVLFAIVSLIEAEEESGRACILLYGECTKASGSCCSNLICDCYRKLKKGVQIARQCFCLEKDVVYKKHI</sequence>
<keyword id="KW-1015">Disulfide bond</keyword>
<keyword id="KW-0964">Secreted</keyword>
<keyword id="KW-0732">Signal</keyword>
<keyword id="KW-0800">Toxin</keyword>
<name>TXBJA_LYCSI</name>
<protein>
    <recommendedName>
        <fullName>U11-lycotoxin-Ls1a</fullName>
    </recommendedName>
    <alternativeName>
        <fullName>Toxin-like structure LSTX-J10</fullName>
    </alternativeName>
</protein>
<dbReference type="EMBL" id="EU926096">
    <property type="protein sequence ID" value="ACI41428.1"/>
    <property type="molecule type" value="mRNA"/>
</dbReference>
<dbReference type="EMBL" id="FM864100">
    <property type="protein sequence ID" value="CAS03697.1"/>
    <property type="molecule type" value="mRNA"/>
</dbReference>
<dbReference type="SMR" id="B6DD12"/>
<dbReference type="ArachnoServer" id="AS001035">
    <property type="toxin name" value="U11-lycotoxin-Ls1a"/>
</dbReference>
<dbReference type="GO" id="GO:0005576">
    <property type="term" value="C:extracellular region"/>
    <property type="evidence" value="ECO:0007669"/>
    <property type="project" value="UniProtKB-SubCell"/>
</dbReference>
<dbReference type="GO" id="GO:0090729">
    <property type="term" value="F:toxin activity"/>
    <property type="evidence" value="ECO:0007669"/>
    <property type="project" value="UniProtKB-KW"/>
</dbReference>
<dbReference type="InterPro" id="IPR019553">
    <property type="entry name" value="Spider_toxin_CSTX_knottin"/>
</dbReference>
<dbReference type="Pfam" id="PF10530">
    <property type="entry name" value="Toxin_35"/>
    <property type="match status" value="1"/>
</dbReference>
<evidence type="ECO:0000250" key="1"/>
<evidence type="ECO:0000255" key="2"/>
<evidence type="ECO:0000305" key="3"/>
<reference key="1">
    <citation type="journal article" date="2010" name="Zoology">
        <title>Transcriptome analysis of the venom glands of the Chinese wolf spider Lycosa singoriensis.</title>
        <authorList>
            <person name="Zhang Y."/>
            <person name="Chen J."/>
            <person name="Tang X."/>
            <person name="Wang F."/>
            <person name="Jiang L."/>
            <person name="Xiong X."/>
            <person name="Wang M."/>
            <person name="Rong M."/>
            <person name="Liu Z."/>
            <person name="Liang S."/>
        </authorList>
    </citation>
    <scope>NUCLEOTIDE SEQUENCE [LARGE SCALE MRNA]</scope>
    <source>
        <tissue>Venom gland</tissue>
    </source>
</reference>
<comment type="subcellular location">
    <subcellularLocation>
        <location evidence="1">Secreted</location>
    </subcellularLocation>
</comment>
<comment type="tissue specificity">
    <text>Expressed by the venom gland.</text>
</comment>
<comment type="PTM">
    <text evidence="1">Contains 4 disulfide bonds.</text>
</comment>
<comment type="similarity">
    <text evidence="3">Belongs to the neurotoxin 19 (CSTX) family. 10 (U11-Lctx) subfamily.</text>
</comment>
<accession>B6DD12</accession>
<feature type="signal peptide" evidence="2">
    <location>
        <begin position="1"/>
        <end position="20"/>
    </location>
</feature>
<feature type="propeptide" id="PRO_0000401843" evidence="1">
    <location>
        <begin position="21"/>
        <end position="26"/>
    </location>
</feature>
<feature type="chain" id="PRO_0000401844" description="U11-lycotoxin-Ls1a">
    <location>
        <begin position="27"/>
        <end position="77"/>
    </location>
</feature>
<organism>
    <name type="scientific">Lycosa singoriensis</name>
    <name type="common">Wolf spider</name>
    <name type="synonym">Aranea singoriensis</name>
    <dbReference type="NCBI Taxonomy" id="434756"/>
    <lineage>
        <taxon>Eukaryota</taxon>
        <taxon>Metazoa</taxon>
        <taxon>Ecdysozoa</taxon>
        <taxon>Arthropoda</taxon>
        <taxon>Chelicerata</taxon>
        <taxon>Arachnida</taxon>
        <taxon>Araneae</taxon>
        <taxon>Araneomorphae</taxon>
        <taxon>Entelegynae</taxon>
        <taxon>Lycosoidea</taxon>
        <taxon>Lycosidae</taxon>
        <taxon>Lycosa</taxon>
    </lineage>
</organism>